<accession>A5VZR9</accession>
<feature type="chain" id="PRO_1000067455" description="C4-dicarboxylate transport protein">
    <location>
        <begin position="1"/>
        <end position="440"/>
    </location>
</feature>
<feature type="transmembrane region" description="Helical" evidence="1">
    <location>
        <begin position="15"/>
        <end position="35"/>
    </location>
</feature>
<feature type="transmembrane region" description="Helical" evidence="1">
    <location>
        <begin position="46"/>
        <end position="66"/>
    </location>
</feature>
<feature type="transmembrane region" description="Helical" evidence="1">
    <location>
        <begin position="78"/>
        <end position="98"/>
    </location>
</feature>
<feature type="transmembrane region" description="Helical" evidence="1">
    <location>
        <begin position="146"/>
        <end position="166"/>
    </location>
</feature>
<feature type="transmembrane region" description="Helical" evidence="1">
    <location>
        <begin position="190"/>
        <end position="210"/>
    </location>
</feature>
<feature type="transmembrane region" description="Helical" evidence="1">
    <location>
        <begin position="224"/>
        <end position="244"/>
    </location>
</feature>
<feature type="transmembrane region" description="Helical" evidence="1">
    <location>
        <begin position="291"/>
        <end position="311"/>
    </location>
</feature>
<feature type="transmembrane region" description="Helical" evidence="1">
    <location>
        <begin position="332"/>
        <end position="352"/>
    </location>
</feature>
<feature type="transmembrane region" description="Helical" evidence="1">
    <location>
        <begin position="354"/>
        <end position="374"/>
    </location>
</feature>
<feature type="region of interest" description="Disordered" evidence="2">
    <location>
        <begin position="420"/>
        <end position="440"/>
    </location>
</feature>
<dbReference type="EMBL" id="CP000712">
    <property type="protein sequence ID" value="ABQ77379.1"/>
    <property type="molecule type" value="Genomic_DNA"/>
</dbReference>
<dbReference type="SMR" id="A5VZR9"/>
<dbReference type="KEGG" id="ppf:Pput_1218"/>
<dbReference type="eggNOG" id="COG1301">
    <property type="taxonomic scope" value="Bacteria"/>
</dbReference>
<dbReference type="HOGENOM" id="CLU_019375_7_0_6"/>
<dbReference type="GO" id="GO:0005886">
    <property type="term" value="C:plasma membrane"/>
    <property type="evidence" value="ECO:0007669"/>
    <property type="project" value="UniProtKB-SubCell"/>
</dbReference>
<dbReference type="GO" id="GO:0015138">
    <property type="term" value="F:fumarate transmembrane transporter activity"/>
    <property type="evidence" value="ECO:0007669"/>
    <property type="project" value="TreeGrafter"/>
</dbReference>
<dbReference type="GO" id="GO:0015366">
    <property type="term" value="F:malate:proton symporter activity"/>
    <property type="evidence" value="ECO:0007669"/>
    <property type="project" value="TreeGrafter"/>
</dbReference>
<dbReference type="GO" id="GO:0015141">
    <property type="term" value="F:succinate transmembrane transporter activity"/>
    <property type="evidence" value="ECO:0007669"/>
    <property type="project" value="TreeGrafter"/>
</dbReference>
<dbReference type="GO" id="GO:0070778">
    <property type="term" value="P:L-aspartate transmembrane transport"/>
    <property type="evidence" value="ECO:0007669"/>
    <property type="project" value="TreeGrafter"/>
</dbReference>
<dbReference type="FunFam" id="1.10.3860.10:FF:000001">
    <property type="entry name" value="C4-dicarboxylate transport protein"/>
    <property type="match status" value="1"/>
</dbReference>
<dbReference type="Gene3D" id="1.10.3860.10">
    <property type="entry name" value="Sodium:dicarboxylate symporter"/>
    <property type="match status" value="1"/>
</dbReference>
<dbReference type="HAMAP" id="MF_01300">
    <property type="entry name" value="C4_dicarb_transport"/>
    <property type="match status" value="1"/>
</dbReference>
<dbReference type="InterPro" id="IPR023954">
    <property type="entry name" value="C4_dicarb_transport"/>
</dbReference>
<dbReference type="InterPro" id="IPR001991">
    <property type="entry name" value="Na-dicarboxylate_symporter"/>
</dbReference>
<dbReference type="InterPro" id="IPR018107">
    <property type="entry name" value="Na-dicarboxylate_symporter_CS"/>
</dbReference>
<dbReference type="InterPro" id="IPR036458">
    <property type="entry name" value="Na:dicarbo_symporter_sf"/>
</dbReference>
<dbReference type="NCBIfam" id="NF002461">
    <property type="entry name" value="PRK01663.1"/>
    <property type="match status" value="1"/>
</dbReference>
<dbReference type="NCBIfam" id="NF009587">
    <property type="entry name" value="PRK13027.1"/>
    <property type="match status" value="1"/>
</dbReference>
<dbReference type="PANTHER" id="PTHR42865:SF1">
    <property type="entry name" value="AEROBIC C4-DICARBOXYLATE TRANSPORT PROTEIN"/>
    <property type="match status" value="1"/>
</dbReference>
<dbReference type="PANTHER" id="PTHR42865">
    <property type="entry name" value="PROTON/GLUTAMATE-ASPARTATE SYMPORTER"/>
    <property type="match status" value="1"/>
</dbReference>
<dbReference type="Pfam" id="PF00375">
    <property type="entry name" value="SDF"/>
    <property type="match status" value="1"/>
</dbReference>
<dbReference type="PRINTS" id="PR00173">
    <property type="entry name" value="EDTRNSPORT"/>
</dbReference>
<dbReference type="SUPFAM" id="SSF118215">
    <property type="entry name" value="Proton glutamate symport protein"/>
    <property type="match status" value="1"/>
</dbReference>
<dbReference type="PROSITE" id="PS00713">
    <property type="entry name" value="NA_DICARBOXYL_SYMP_1"/>
    <property type="match status" value="1"/>
</dbReference>
<dbReference type="PROSITE" id="PS00714">
    <property type="entry name" value="NA_DICARBOXYL_SYMP_2"/>
    <property type="match status" value="1"/>
</dbReference>
<proteinExistence type="inferred from homology"/>
<comment type="function">
    <text evidence="1">Responsible for the transport of dicarboxylates such as succinate, fumarate, and malate from the periplasm across the membrane.</text>
</comment>
<comment type="subcellular location">
    <subcellularLocation>
        <location evidence="1">Cell inner membrane</location>
        <topology evidence="1">Multi-pass membrane protein</topology>
    </subcellularLocation>
</comment>
<comment type="similarity">
    <text evidence="1">Belongs to the dicarboxylate/amino acid:cation symporter (DAACS) (TC 2.A.23) family.</text>
</comment>
<name>DCTA_PSEP1</name>
<gene>
    <name evidence="1" type="primary">dctA</name>
    <name type="ordered locus">Pput_1218</name>
</gene>
<organism>
    <name type="scientific">Pseudomonas putida (strain ATCC 700007 / DSM 6899 / JCM 31910 / BCRC 17059 / LMG 24140 / F1)</name>
    <dbReference type="NCBI Taxonomy" id="351746"/>
    <lineage>
        <taxon>Bacteria</taxon>
        <taxon>Pseudomonadati</taxon>
        <taxon>Pseudomonadota</taxon>
        <taxon>Gammaproteobacteria</taxon>
        <taxon>Pseudomonadales</taxon>
        <taxon>Pseudomonadaceae</taxon>
        <taxon>Pseudomonas</taxon>
    </lineage>
</organism>
<evidence type="ECO:0000255" key="1">
    <source>
        <dbReference type="HAMAP-Rule" id="MF_01300"/>
    </source>
</evidence>
<evidence type="ECO:0000256" key="2">
    <source>
        <dbReference type="SAM" id="MobiDB-lite"/>
    </source>
</evidence>
<protein>
    <recommendedName>
        <fullName evidence="1">C4-dicarboxylate transport protein</fullName>
    </recommendedName>
</protein>
<keyword id="KW-0997">Cell inner membrane</keyword>
<keyword id="KW-1003">Cell membrane</keyword>
<keyword id="KW-0472">Membrane</keyword>
<keyword id="KW-0769">Symport</keyword>
<keyword id="KW-0812">Transmembrane</keyword>
<keyword id="KW-1133">Transmembrane helix</keyword>
<keyword id="KW-0813">Transport</keyword>
<reference key="1">
    <citation type="submission" date="2007-05" db="EMBL/GenBank/DDBJ databases">
        <title>Complete sequence of Pseudomonas putida F1.</title>
        <authorList>
            <consortium name="US DOE Joint Genome Institute"/>
            <person name="Copeland A."/>
            <person name="Lucas S."/>
            <person name="Lapidus A."/>
            <person name="Barry K."/>
            <person name="Detter J.C."/>
            <person name="Glavina del Rio T."/>
            <person name="Hammon N."/>
            <person name="Israni S."/>
            <person name="Dalin E."/>
            <person name="Tice H."/>
            <person name="Pitluck S."/>
            <person name="Chain P."/>
            <person name="Malfatti S."/>
            <person name="Shin M."/>
            <person name="Vergez L."/>
            <person name="Schmutz J."/>
            <person name="Larimer F."/>
            <person name="Land M."/>
            <person name="Hauser L."/>
            <person name="Kyrpides N."/>
            <person name="Lykidis A."/>
            <person name="Parales R."/>
            <person name="Richardson P."/>
        </authorList>
    </citation>
    <scope>NUCLEOTIDE SEQUENCE [LARGE SCALE GENOMIC DNA]</scope>
    <source>
        <strain>ATCC 700007 / DSM 6899 / JCM 31910 / BCRC 17059 / LMG 24140 / F1</strain>
    </source>
</reference>
<sequence length="440" mass="46240">MTTRQPLYKSLYVQVLVAITIGILLGHYYPETGVALKPLGDGFVKLIKMVIAPIIFCTVVSGIAGMQSMKSVGKTGGYALLYFEIVSTIALIIGLVVVNVVKPGAGMHIDVSTLNASSVAAYAAAGAQQTTVGFLLNVIPNTVVGAFANGDILQVLMFSVLFGFALHRLGSYGKPVLDMIDRFAHVMFNIINMIMKLAPIGAFGAMAFTIGQYGVGSLVQLGYLMACFYITCLLFVLVVLGGICRAHGFSVIKLIRYIREELLIVLGTSSSESALPRMLAKMERLGAKKSVVGLVIPTGYSFNLDGTSIYLTMAAVFIAQATDTTMDITHQITLLLVLLVASKGAAGVTGSGFIVLAATLSAVGHLPVAGLALILGIDRFMSEARALTNLVGNAVATVVVAKWVKEMDNDKLASELASGGAPLVDTRPTDDLGVAEGPAR</sequence>